<sequence>MIVPWQQISPEALSNLIREFVLREGTDYGESEYSLEEKIAQVQQQLECGEAVVVFSELHETVDIQLKQKF</sequence>
<name>Y1320_VIBVU</name>
<reference key="1">
    <citation type="submission" date="2002-12" db="EMBL/GenBank/DDBJ databases">
        <title>Complete genome sequence of Vibrio vulnificus CMCP6.</title>
        <authorList>
            <person name="Rhee J.H."/>
            <person name="Kim S.Y."/>
            <person name="Chung S.S."/>
            <person name="Kim J.J."/>
            <person name="Moon Y.H."/>
            <person name="Jeong H."/>
            <person name="Choy H.E."/>
        </authorList>
    </citation>
    <scope>NUCLEOTIDE SEQUENCE [LARGE SCALE GENOMIC DNA]</scope>
    <source>
        <strain>CMCP6</strain>
    </source>
</reference>
<protein>
    <recommendedName>
        <fullName evidence="1">UPF0270 protein VV1_1320</fullName>
    </recommendedName>
</protein>
<dbReference type="EMBL" id="AE016795">
    <property type="protein sequence ID" value="AAO09774.1"/>
    <property type="molecule type" value="Genomic_DNA"/>
</dbReference>
<dbReference type="RefSeq" id="WP_011079299.1">
    <property type="nucleotide sequence ID" value="NC_004459.3"/>
</dbReference>
<dbReference type="SMR" id="Q8DCS6"/>
<dbReference type="KEGG" id="vvu:VV1_1320"/>
<dbReference type="HOGENOM" id="CLU_186759_2_0_6"/>
<dbReference type="Proteomes" id="UP000002275">
    <property type="component" value="Chromosome 1"/>
</dbReference>
<dbReference type="Gene3D" id="1.10.10.610">
    <property type="entry name" value="YehU-like"/>
    <property type="match status" value="1"/>
</dbReference>
<dbReference type="HAMAP" id="MF_00690">
    <property type="entry name" value="UPF0270"/>
    <property type="match status" value="1"/>
</dbReference>
<dbReference type="InterPro" id="IPR010648">
    <property type="entry name" value="UPF0270"/>
</dbReference>
<dbReference type="InterPro" id="IPR036685">
    <property type="entry name" value="YehU-like_sf"/>
</dbReference>
<dbReference type="NCBIfam" id="NF003438">
    <property type="entry name" value="PRK04966.1"/>
    <property type="match status" value="1"/>
</dbReference>
<dbReference type="Pfam" id="PF06794">
    <property type="entry name" value="UPF0270"/>
    <property type="match status" value="1"/>
</dbReference>
<dbReference type="PIRSF" id="PIRSF006169">
    <property type="entry name" value="UCP006169"/>
    <property type="match status" value="1"/>
</dbReference>
<dbReference type="SUPFAM" id="SSF118001">
    <property type="entry name" value="YehU-like"/>
    <property type="match status" value="1"/>
</dbReference>
<gene>
    <name type="ordered locus">VV1_1320</name>
</gene>
<accession>Q8DCS6</accession>
<evidence type="ECO:0000255" key="1">
    <source>
        <dbReference type="HAMAP-Rule" id="MF_00690"/>
    </source>
</evidence>
<feature type="chain" id="PRO_0000214861" description="UPF0270 protein VV1_1320">
    <location>
        <begin position="1"/>
        <end position="70"/>
    </location>
</feature>
<comment type="similarity">
    <text evidence="1">Belongs to the UPF0270 family.</text>
</comment>
<proteinExistence type="inferred from homology"/>
<organism>
    <name type="scientific">Vibrio vulnificus (strain CMCP6)</name>
    <dbReference type="NCBI Taxonomy" id="216895"/>
    <lineage>
        <taxon>Bacteria</taxon>
        <taxon>Pseudomonadati</taxon>
        <taxon>Pseudomonadota</taxon>
        <taxon>Gammaproteobacteria</taxon>
        <taxon>Vibrionales</taxon>
        <taxon>Vibrionaceae</taxon>
        <taxon>Vibrio</taxon>
    </lineage>
</organism>